<accession>A9BQJ1</accession>
<gene>
    <name evidence="1" type="primary">mnmG</name>
    <name evidence="1" type="synonym">gidA</name>
    <name type="ordered locus">Daci_0046</name>
</gene>
<comment type="function">
    <text evidence="1">NAD-binding protein involved in the addition of a carboxymethylaminomethyl (cmnm) group at the wobble position (U34) of certain tRNAs, forming tRNA-cmnm(5)s(2)U34.</text>
</comment>
<comment type="cofactor">
    <cofactor evidence="1">
        <name>FAD</name>
        <dbReference type="ChEBI" id="CHEBI:57692"/>
    </cofactor>
</comment>
<comment type="subunit">
    <text evidence="1">Homodimer. Heterotetramer of two MnmE and two MnmG subunits.</text>
</comment>
<comment type="subcellular location">
    <subcellularLocation>
        <location evidence="1">Cytoplasm</location>
    </subcellularLocation>
</comment>
<comment type="similarity">
    <text evidence="1">Belongs to the MnmG family.</text>
</comment>
<dbReference type="EMBL" id="CP000884">
    <property type="protein sequence ID" value="ABX32693.1"/>
    <property type="molecule type" value="Genomic_DNA"/>
</dbReference>
<dbReference type="RefSeq" id="WP_012201986.1">
    <property type="nucleotide sequence ID" value="NC_010002.1"/>
</dbReference>
<dbReference type="SMR" id="A9BQJ1"/>
<dbReference type="STRING" id="398578.Daci_0046"/>
<dbReference type="GeneID" id="24115771"/>
<dbReference type="KEGG" id="dac:Daci_0046"/>
<dbReference type="eggNOG" id="COG0445">
    <property type="taxonomic scope" value="Bacteria"/>
</dbReference>
<dbReference type="HOGENOM" id="CLU_007831_2_2_4"/>
<dbReference type="Proteomes" id="UP000000784">
    <property type="component" value="Chromosome"/>
</dbReference>
<dbReference type="GO" id="GO:0005829">
    <property type="term" value="C:cytosol"/>
    <property type="evidence" value="ECO:0007669"/>
    <property type="project" value="TreeGrafter"/>
</dbReference>
<dbReference type="GO" id="GO:0050660">
    <property type="term" value="F:flavin adenine dinucleotide binding"/>
    <property type="evidence" value="ECO:0007669"/>
    <property type="project" value="UniProtKB-UniRule"/>
</dbReference>
<dbReference type="GO" id="GO:0030488">
    <property type="term" value="P:tRNA methylation"/>
    <property type="evidence" value="ECO:0007669"/>
    <property type="project" value="TreeGrafter"/>
</dbReference>
<dbReference type="GO" id="GO:0002098">
    <property type="term" value="P:tRNA wobble uridine modification"/>
    <property type="evidence" value="ECO:0007669"/>
    <property type="project" value="InterPro"/>
</dbReference>
<dbReference type="FunFam" id="1.10.10.1800:FF:000001">
    <property type="entry name" value="tRNA uridine 5-carboxymethylaminomethyl modification enzyme MnmG"/>
    <property type="match status" value="1"/>
</dbReference>
<dbReference type="FunFam" id="1.10.150.570:FF:000001">
    <property type="entry name" value="tRNA uridine 5-carboxymethylaminomethyl modification enzyme MnmG"/>
    <property type="match status" value="1"/>
</dbReference>
<dbReference type="FunFam" id="3.50.50.60:FF:000002">
    <property type="entry name" value="tRNA uridine 5-carboxymethylaminomethyl modification enzyme MnmG"/>
    <property type="match status" value="1"/>
</dbReference>
<dbReference type="FunFam" id="3.50.50.60:FF:000010">
    <property type="entry name" value="tRNA uridine 5-carboxymethylaminomethyl modification enzyme MnmG"/>
    <property type="match status" value="1"/>
</dbReference>
<dbReference type="Gene3D" id="3.50.50.60">
    <property type="entry name" value="FAD/NAD(P)-binding domain"/>
    <property type="match status" value="2"/>
</dbReference>
<dbReference type="Gene3D" id="1.10.150.570">
    <property type="entry name" value="GidA associated domain, C-terminal subdomain"/>
    <property type="match status" value="1"/>
</dbReference>
<dbReference type="Gene3D" id="1.10.10.1800">
    <property type="entry name" value="tRNA uridine 5-carboxymethylaminomethyl modification enzyme MnmG/GidA"/>
    <property type="match status" value="1"/>
</dbReference>
<dbReference type="HAMAP" id="MF_00129">
    <property type="entry name" value="MnmG_GidA"/>
    <property type="match status" value="1"/>
</dbReference>
<dbReference type="InterPro" id="IPR036188">
    <property type="entry name" value="FAD/NAD-bd_sf"/>
</dbReference>
<dbReference type="InterPro" id="IPR049312">
    <property type="entry name" value="GIDA_C_N"/>
</dbReference>
<dbReference type="InterPro" id="IPR004416">
    <property type="entry name" value="MnmG"/>
</dbReference>
<dbReference type="InterPro" id="IPR002218">
    <property type="entry name" value="MnmG-rel"/>
</dbReference>
<dbReference type="InterPro" id="IPR020595">
    <property type="entry name" value="MnmG-rel_CS"/>
</dbReference>
<dbReference type="InterPro" id="IPR026904">
    <property type="entry name" value="MnmG_C"/>
</dbReference>
<dbReference type="InterPro" id="IPR047001">
    <property type="entry name" value="MnmG_C_subdom"/>
</dbReference>
<dbReference type="InterPro" id="IPR044920">
    <property type="entry name" value="MnmG_C_subdom_sf"/>
</dbReference>
<dbReference type="InterPro" id="IPR040131">
    <property type="entry name" value="MnmG_N"/>
</dbReference>
<dbReference type="NCBIfam" id="TIGR00136">
    <property type="entry name" value="mnmG_gidA"/>
    <property type="match status" value="1"/>
</dbReference>
<dbReference type="PANTHER" id="PTHR11806">
    <property type="entry name" value="GLUCOSE INHIBITED DIVISION PROTEIN A"/>
    <property type="match status" value="1"/>
</dbReference>
<dbReference type="PANTHER" id="PTHR11806:SF0">
    <property type="entry name" value="PROTEIN MTO1 HOMOLOG, MITOCHONDRIAL"/>
    <property type="match status" value="1"/>
</dbReference>
<dbReference type="Pfam" id="PF01134">
    <property type="entry name" value="GIDA"/>
    <property type="match status" value="1"/>
</dbReference>
<dbReference type="Pfam" id="PF21680">
    <property type="entry name" value="GIDA_C_1st"/>
    <property type="match status" value="1"/>
</dbReference>
<dbReference type="Pfam" id="PF13932">
    <property type="entry name" value="SAM_GIDA_C"/>
    <property type="match status" value="1"/>
</dbReference>
<dbReference type="SMART" id="SM01228">
    <property type="entry name" value="GIDA_assoc_3"/>
    <property type="match status" value="1"/>
</dbReference>
<dbReference type="SUPFAM" id="SSF51905">
    <property type="entry name" value="FAD/NAD(P)-binding domain"/>
    <property type="match status" value="1"/>
</dbReference>
<dbReference type="PROSITE" id="PS01280">
    <property type="entry name" value="GIDA_1"/>
    <property type="match status" value="1"/>
</dbReference>
<dbReference type="PROSITE" id="PS01281">
    <property type="entry name" value="GIDA_2"/>
    <property type="match status" value="1"/>
</dbReference>
<reference key="1">
    <citation type="submission" date="2007-11" db="EMBL/GenBank/DDBJ databases">
        <title>Complete sequence of Delftia acidovorans DSM 14801 / SPH-1.</title>
        <authorList>
            <person name="Copeland A."/>
            <person name="Lucas S."/>
            <person name="Lapidus A."/>
            <person name="Barry K."/>
            <person name="Glavina del Rio T."/>
            <person name="Dalin E."/>
            <person name="Tice H."/>
            <person name="Pitluck S."/>
            <person name="Lowry S."/>
            <person name="Clum A."/>
            <person name="Schmutz J."/>
            <person name="Larimer F."/>
            <person name="Land M."/>
            <person name="Hauser L."/>
            <person name="Kyrpides N."/>
            <person name="Kim E."/>
            <person name="Schleheck D."/>
            <person name="Richardson P."/>
        </authorList>
    </citation>
    <scope>NUCLEOTIDE SEQUENCE [LARGE SCALE GENOMIC DNA]</scope>
    <source>
        <strain>DSM 14801 / SPH-1</strain>
    </source>
</reference>
<evidence type="ECO:0000255" key="1">
    <source>
        <dbReference type="HAMAP-Rule" id="MF_00129"/>
    </source>
</evidence>
<proteinExistence type="inferred from homology"/>
<name>MNMG_DELAS</name>
<keyword id="KW-0963">Cytoplasm</keyword>
<keyword id="KW-0274">FAD</keyword>
<keyword id="KW-0285">Flavoprotein</keyword>
<keyword id="KW-0520">NAD</keyword>
<keyword id="KW-1185">Reference proteome</keyword>
<keyword id="KW-0819">tRNA processing</keyword>
<feature type="chain" id="PRO_1000095649" description="tRNA uridine 5-carboxymethylaminomethyl modification enzyme MnmG">
    <location>
        <begin position="1"/>
        <end position="659"/>
    </location>
</feature>
<feature type="binding site" evidence="1">
    <location>
        <begin position="13"/>
        <end position="18"/>
    </location>
    <ligand>
        <name>FAD</name>
        <dbReference type="ChEBI" id="CHEBI:57692"/>
    </ligand>
</feature>
<feature type="binding site" evidence="1">
    <location>
        <begin position="281"/>
        <end position="295"/>
    </location>
    <ligand>
        <name>NAD(+)</name>
        <dbReference type="ChEBI" id="CHEBI:57540"/>
    </ligand>
</feature>
<protein>
    <recommendedName>
        <fullName evidence="1">tRNA uridine 5-carboxymethylaminomethyl modification enzyme MnmG</fullName>
    </recommendedName>
    <alternativeName>
        <fullName evidence="1">Glucose-inhibited division protein A</fullName>
    </alternativeName>
</protein>
<sequence>MLYPQEFDVIVVGGGHAGTEAALAAARMGCRTLLLSHNIETLGQMSCNPSIGGIGKGHLVKEVDALGGAMALATDIGGIQFRILNSSKGPAVRATRAQADRILYKAAIRDMLENQPNLWLFQQAVDDLMVEGDRVVGAVTQVGVRFRSRTVVLTAGTFLDGKIHVGLNNYAAGRAGDPPAVSLSSRLKELQLPQGRLKTGTPPRLDGRSIDFSQCEEQPGDGMPGGVNEGVLPVFSFIGNAAMHPRQMPCWITHTNERTHDIIRSGFDRSPMFTGKIEGVGPRYCPSVEDKINRFADKESHQIFLEPEGLTTNEFYPNGISTSLPFDIQYELVRSMKGLENAHILRPGYAIEYDYFDPRSLKSSFETRQIQGLFFAGQINGTTGYEEAAAQGLFAGLNAALQCRGQEAWLPRRDEAYLGVLVDDLITKGVTEPYRMFTSRAEFRLQLREDNADMRLTEAGRAMGLVDDARWDAFSRKRDAVSRETERLKSTWVNPRIVTPEESERVLGKSIEREYNLFDLLRRPDVGYGKLMSLNEGRYASADVQPDVLGDLSASVVEQVEIAAKYAGYIDRQKDEVQRAAHFENLRLPAELDYMQVPALSFEVRQSLQKHRPETLGQASRMSGVTPAAISLLMVHLKKGGFRGFAPDVTDAKGEEASA</sequence>
<organism>
    <name type="scientific">Delftia acidovorans (strain DSM 14801 / SPH-1)</name>
    <dbReference type="NCBI Taxonomy" id="398578"/>
    <lineage>
        <taxon>Bacteria</taxon>
        <taxon>Pseudomonadati</taxon>
        <taxon>Pseudomonadota</taxon>
        <taxon>Betaproteobacteria</taxon>
        <taxon>Burkholderiales</taxon>
        <taxon>Comamonadaceae</taxon>
        <taxon>Delftia</taxon>
    </lineage>
</organism>